<feature type="chain" id="PRO_1000094726" description="UDP-N-acetylglucosamine 1-carboxyvinyltransferase">
    <location>
        <begin position="1"/>
        <end position="423"/>
    </location>
</feature>
<feature type="active site" description="Proton donor" evidence="1">
    <location>
        <position position="122"/>
    </location>
</feature>
<feature type="binding site" evidence="1">
    <location>
        <begin position="22"/>
        <end position="23"/>
    </location>
    <ligand>
        <name>phosphoenolpyruvate</name>
        <dbReference type="ChEBI" id="CHEBI:58702"/>
    </ligand>
</feature>
<feature type="binding site" evidence="1">
    <location>
        <position position="98"/>
    </location>
    <ligand>
        <name>UDP-N-acetyl-alpha-D-glucosamine</name>
        <dbReference type="ChEBI" id="CHEBI:57705"/>
    </ligand>
</feature>
<feature type="binding site" evidence="1">
    <location>
        <begin position="127"/>
        <end position="131"/>
    </location>
    <ligand>
        <name>UDP-N-acetyl-alpha-D-glucosamine</name>
        <dbReference type="ChEBI" id="CHEBI:57705"/>
    </ligand>
</feature>
<feature type="binding site" evidence="1">
    <location>
        <position position="311"/>
    </location>
    <ligand>
        <name>UDP-N-acetyl-alpha-D-glucosamine</name>
        <dbReference type="ChEBI" id="CHEBI:57705"/>
    </ligand>
</feature>
<feature type="binding site" evidence="1">
    <location>
        <position position="333"/>
    </location>
    <ligand>
        <name>UDP-N-acetyl-alpha-D-glucosamine</name>
        <dbReference type="ChEBI" id="CHEBI:57705"/>
    </ligand>
</feature>
<feature type="modified residue" description="2-(S-cysteinyl)pyruvic acid O-phosphothioketal" evidence="1">
    <location>
        <position position="122"/>
    </location>
</feature>
<organism>
    <name type="scientific">Stenotrophomonas maltophilia (strain R551-3)</name>
    <dbReference type="NCBI Taxonomy" id="391008"/>
    <lineage>
        <taxon>Bacteria</taxon>
        <taxon>Pseudomonadati</taxon>
        <taxon>Pseudomonadota</taxon>
        <taxon>Gammaproteobacteria</taxon>
        <taxon>Lysobacterales</taxon>
        <taxon>Lysobacteraceae</taxon>
        <taxon>Stenotrophomonas</taxon>
        <taxon>Stenotrophomonas maltophilia group</taxon>
    </lineage>
</organism>
<sequence>MAKIVVTGGAALHGEVSISGAKNAVLPILCATLLADEPVEITNVPHLHDVVTTVKLLGELGAKVTIDQGTLSRGSAIVVDPRSVNQHVAPYELVKTMRASILVLGPLLARFGAAEVSLPGGCAIGSRPVDQHIKGLQALGAEIVVENGFIKATAKRLKGGHFTFDMVSVTGTENVLMGAVLAEGTTILDNCAMEPEVTDLAHCLIALGAKIEGLGTARLVIEGVERLSGGRHEVLPDRIETGTFLVAAAMTGGKVTVNRARPNTMDAVLSKLVEAGAKIETTDDTITLDMQGKRPKAVNLTTAPYPAFPTDMQAQFMALNCVADGVGVINETIFENRFMHVNELLRLGADIQVEGHTAIVRGNEHLSGAPVMATDLRASASLILAGLMASGETTIDRIYHLDRGYENIEEKLSSLGATIRRVP</sequence>
<reference key="1">
    <citation type="submission" date="2008-06" db="EMBL/GenBank/DDBJ databases">
        <title>Complete sequence of Stenotrophomonas maltophilia R551-3.</title>
        <authorList>
            <consortium name="US DOE Joint Genome Institute"/>
            <person name="Lucas S."/>
            <person name="Copeland A."/>
            <person name="Lapidus A."/>
            <person name="Glavina del Rio T."/>
            <person name="Dalin E."/>
            <person name="Tice H."/>
            <person name="Pitluck S."/>
            <person name="Chain P."/>
            <person name="Malfatti S."/>
            <person name="Shin M."/>
            <person name="Vergez L."/>
            <person name="Lang D."/>
            <person name="Schmutz J."/>
            <person name="Larimer F."/>
            <person name="Land M."/>
            <person name="Hauser L."/>
            <person name="Kyrpides N."/>
            <person name="Mikhailova N."/>
            <person name="Taghavi S."/>
            <person name="Monchy S."/>
            <person name="Newman L."/>
            <person name="Vangronsveld J."/>
            <person name="van der Lelie D."/>
            <person name="Richardson P."/>
        </authorList>
    </citation>
    <scope>NUCLEOTIDE SEQUENCE [LARGE SCALE GENOMIC DNA]</scope>
    <source>
        <strain>R551-3</strain>
    </source>
</reference>
<accession>B4SN21</accession>
<gene>
    <name evidence="1" type="primary">murA</name>
    <name type="ordered locus">Smal_0961</name>
</gene>
<comment type="function">
    <text evidence="1">Cell wall formation. Adds enolpyruvyl to UDP-N-acetylglucosamine.</text>
</comment>
<comment type="catalytic activity">
    <reaction evidence="1">
        <text>phosphoenolpyruvate + UDP-N-acetyl-alpha-D-glucosamine = UDP-N-acetyl-3-O-(1-carboxyvinyl)-alpha-D-glucosamine + phosphate</text>
        <dbReference type="Rhea" id="RHEA:18681"/>
        <dbReference type="ChEBI" id="CHEBI:43474"/>
        <dbReference type="ChEBI" id="CHEBI:57705"/>
        <dbReference type="ChEBI" id="CHEBI:58702"/>
        <dbReference type="ChEBI" id="CHEBI:68483"/>
        <dbReference type="EC" id="2.5.1.7"/>
    </reaction>
</comment>
<comment type="pathway">
    <text evidence="1">Cell wall biogenesis; peptidoglycan biosynthesis.</text>
</comment>
<comment type="subcellular location">
    <subcellularLocation>
        <location evidence="1">Cytoplasm</location>
    </subcellularLocation>
</comment>
<comment type="similarity">
    <text evidence="1">Belongs to the EPSP synthase family. MurA subfamily.</text>
</comment>
<protein>
    <recommendedName>
        <fullName evidence="1">UDP-N-acetylglucosamine 1-carboxyvinyltransferase</fullName>
        <ecNumber evidence="1">2.5.1.7</ecNumber>
    </recommendedName>
    <alternativeName>
        <fullName evidence="1">Enoylpyruvate transferase</fullName>
    </alternativeName>
    <alternativeName>
        <fullName evidence="1">UDP-N-acetylglucosamine enolpyruvyl transferase</fullName>
        <shortName evidence="1">EPT</shortName>
    </alternativeName>
</protein>
<evidence type="ECO:0000255" key="1">
    <source>
        <dbReference type="HAMAP-Rule" id="MF_00111"/>
    </source>
</evidence>
<proteinExistence type="inferred from homology"/>
<keyword id="KW-0131">Cell cycle</keyword>
<keyword id="KW-0132">Cell division</keyword>
<keyword id="KW-0133">Cell shape</keyword>
<keyword id="KW-0961">Cell wall biogenesis/degradation</keyword>
<keyword id="KW-0963">Cytoplasm</keyword>
<keyword id="KW-0573">Peptidoglycan synthesis</keyword>
<keyword id="KW-0670">Pyruvate</keyword>
<keyword id="KW-0808">Transferase</keyword>
<dbReference type="EC" id="2.5.1.7" evidence="1"/>
<dbReference type="EMBL" id="CP001111">
    <property type="protein sequence ID" value="ACF50666.1"/>
    <property type="molecule type" value="Genomic_DNA"/>
</dbReference>
<dbReference type="RefSeq" id="WP_012510289.1">
    <property type="nucleotide sequence ID" value="NC_011071.1"/>
</dbReference>
<dbReference type="SMR" id="B4SN21"/>
<dbReference type="STRING" id="391008.Smal_0961"/>
<dbReference type="KEGG" id="smt:Smal_0961"/>
<dbReference type="eggNOG" id="COG0766">
    <property type="taxonomic scope" value="Bacteria"/>
</dbReference>
<dbReference type="HOGENOM" id="CLU_027387_0_0_6"/>
<dbReference type="OrthoDB" id="9803760at2"/>
<dbReference type="UniPathway" id="UPA00219"/>
<dbReference type="Proteomes" id="UP000001867">
    <property type="component" value="Chromosome"/>
</dbReference>
<dbReference type="GO" id="GO:0005737">
    <property type="term" value="C:cytoplasm"/>
    <property type="evidence" value="ECO:0007669"/>
    <property type="project" value="UniProtKB-SubCell"/>
</dbReference>
<dbReference type="GO" id="GO:0008760">
    <property type="term" value="F:UDP-N-acetylglucosamine 1-carboxyvinyltransferase activity"/>
    <property type="evidence" value="ECO:0007669"/>
    <property type="project" value="UniProtKB-UniRule"/>
</dbReference>
<dbReference type="GO" id="GO:0051301">
    <property type="term" value="P:cell division"/>
    <property type="evidence" value="ECO:0007669"/>
    <property type="project" value="UniProtKB-KW"/>
</dbReference>
<dbReference type="GO" id="GO:0071555">
    <property type="term" value="P:cell wall organization"/>
    <property type="evidence" value="ECO:0007669"/>
    <property type="project" value="UniProtKB-KW"/>
</dbReference>
<dbReference type="GO" id="GO:0009252">
    <property type="term" value="P:peptidoglycan biosynthetic process"/>
    <property type="evidence" value="ECO:0007669"/>
    <property type="project" value="UniProtKB-UniRule"/>
</dbReference>
<dbReference type="GO" id="GO:0008360">
    <property type="term" value="P:regulation of cell shape"/>
    <property type="evidence" value="ECO:0007669"/>
    <property type="project" value="UniProtKB-KW"/>
</dbReference>
<dbReference type="GO" id="GO:0019277">
    <property type="term" value="P:UDP-N-acetylgalactosamine biosynthetic process"/>
    <property type="evidence" value="ECO:0007669"/>
    <property type="project" value="InterPro"/>
</dbReference>
<dbReference type="CDD" id="cd01555">
    <property type="entry name" value="UdpNAET"/>
    <property type="match status" value="1"/>
</dbReference>
<dbReference type="FunFam" id="3.65.10.10:FF:000002">
    <property type="entry name" value="UDP-N-acetylglucosamine 1-carboxyvinyltransferase"/>
    <property type="match status" value="1"/>
</dbReference>
<dbReference type="Gene3D" id="3.65.10.10">
    <property type="entry name" value="Enolpyruvate transferase domain"/>
    <property type="match status" value="2"/>
</dbReference>
<dbReference type="HAMAP" id="MF_00111">
    <property type="entry name" value="MurA"/>
    <property type="match status" value="1"/>
</dbReference>
<dbReference type="InterPro" id="IPR001986">
    <property type="entry name" value="Enolpyruvate_Tfrase_dom"/>
</dbReference>
<dbReference type="InterPro" id="IPR036968">
    <property type="entry name" value="Enolpyruvate_Tfrase_sf"/>
</dbReference>
<dbReference type="InterPro" id="IPR050068">
    <property type="entry name" value="MurA_subfamily"/>
</dbReference>
<dbReference type="InterPro" id="IPR013792">
    <property type="entry name" value="RNA3'P_cycl/enolpyr_Trfase_a/b"/>
</dbReference>
<dbReference type="InterPro" id="IPR005750">
    <property type="entry name" value="UDP_GlcNAc_COvinyl_MurA"/>
</dbReference>
<dbReference type="NCBIfam" id="TIGR01072">
    <property type="entry name" value="murA"/>
    <property type="match status" value="1"/>
</dbReference>
<dbReference type="NCBIfam" id="NF006873">
    <property type="entry name" value="PRK09369.1"/>
    <property type="match status" value="1"/>
</dbReference>
<dbReference type="PANTHER" id="PTHR43783">
    <property type="entry name" value="UDP-N-ACETYLGLUCOSAMINE 1-CARBOXYVINYLTRANSFERASE"/>
    <property type="match status" value="1"/>
</dbReference>
<dbReference type="PANTHER" id="PTHR43783:SF1">
    <property type="entry name" value="UDP-N-ACETYLGLUCOSAMINE 1-CARBOXYVINYLTRANSFERASE"/>
    <property type="match status" value="1"/>
</dbReference>
<dbReference type="Pfam" id="PF00275">
    <property type="entry name" value="EPSP_synthase"/>
    <property type="match status" value="1"/>
</dbReference>
<dbReference type="SUPFAM" id="SSF55205">
    <property type="entry name" value="EPT/RTPC-like"/>
    <property type="match status" value="1"/>
</dbReference>
<name>MURA_STRM5</name>